<protein>
    <recommendedName>
        <fullName>Cell wall synthesis protein Wag31</fullName>
    </recommendedName>
    <alternativeName>
        <fullName>Antigen 84</fullName>
    </alternativeName>
</protein>
<feature type="chain" id="PRO_0000421156" description="Cell wall synthesis protein Wag31">
    <location>
        <begin position="1"/>
        <end position="272"/>
    </location>
</feature>
<feature type="region of interest" description="Disordered" evidence="3">
    <location>
        <begin position="1"/>
        <end position="22"/>
    </location>
</feature>
<feature type="region of interest" description="Disordered" evidence="3">
    <location>
        <begin position="62"/>
        <end position="109"/>
    </location>
</feature>
<feature type="region of interest" description="Disordered" evidence="3">
    <location>
        <begin position="243"/>
        <end position="272"/>
    </location>
</feature>
<feature type="coiled-coil region" evidence="2">
    <location>
        <begin position="30"/>
        <end position="67"/>
    </location>
</feature>
<feature type="coiled-coil region" evidence="2">
    <location>
        <begin position="139"/>
        <end position="206"/>
    </location>
</feature>
<feature type="compositionally biased region" description="Low complexity" evidence="3">
    <location>
        <begin position="62"/>
        <end position="76"/>
    </location>
</feature>
<feature type="compositionally biased region" description="Low complexity" evidence="3">
    <location>
        <begin position="94"/>
        <end position="105"/>
    </location>
</feature>
<feature type="modified residue" description="Phosphothreonine" evidence="1">
    <location>
        <position position="74"/>
    </location>
</feature>
<proteinExistence type="evidence at protein level"/>
<dbReference type="EMBL" id="CP000480">
    <property type="protein sequence ID" value="ABK72820.1"/>
    <property type="molecule type" value="Genomic_DNA"/>
</dbReference>
<dbReference type="EMBL" id="CP001663">
    <property type="protein sequence ID" value="AFP40576.1"/>
    <property type="molecule type" value="Genomic_DNA"/>
</dbReference>
<dbReference type="RefSeq" id="WP_011729650.1">
    <property type="nucleotide sequence ID" value="NZ_SIJM01000003.1"/>
</dbReference>
<dbReference type="RefSeq" id="YP_888494.1">
    <property type="nucleotide sequence ID" value="NC_008596.1"/>
</dbReference>
<dbReference type="SMR" id="A0R006"/>
<dbReference type="STRING" id="246196.MSMEG_4217"/>
<dbReference type="PaxDb" id="246196-MSMEI_4119"/>
<dbReference type="GeneID" id="93458937"/>
<dbReference type="KEGG" id="msb:LJ00_20910"/>
<dbReference type="KEGG" id="msg:MSMEI_4119"/>
<dbReference type="KEGG" id="msm:MSMEG_4217"/>
<dbReference type="PATRIC" id="fig|246196.19.peg.4138"/>
<dbReference type="eggNOG" id="COG3599">
    <property type="taxonomic scope" value="Bacteria"/>
</dbReference>
<dbReference type="OrthoDB" id="9815492at2"/>
<dbReference type="Proteomes" id="UP000000757">
    <property type="component" value="Chromosome"/>
</dbReference>
<dbReference type="Proteomes" id="UP000006158">
    <property type="component" value="Chromosome"/>
</dbReference>
<dbReference type="GO" id="GO:0005737">
    <property type="term" value="C:cytoplasm"/>
    <property type="evidence" value="ECO:0007669"/>
    <property type="project" value="UniProtKB-SubCell"/>
</dbReference>
<dbReference type="GO" id="GO:0051301">
    <property type="term" value="P:cell division"/>
    <property type="evidence" value="ECO:0007669"/>
    <property type="project" value="UniProtKB-KW"/>
</dbReference>
<dbReference type="GO" id="GO:0008360">
    <property type="term" value="P:regulation of cell shape"/>
    <property type="evidence" value="ECO:0007669"/>
    <property type="project" value="UniProtKB-KW"/>
</dbReference>
<dbReference type="CDD" id="cd06503">
    <property type="entry name" value="ATP-synt_Fo_b"/>
    <property type="match status" value="1"/>
</dbReference>
<dbReference type="Gene3D" id="6.10.250.660">
    <property type="match status" value="1"/>
</dbReference>
<dbReference type="Gene3D" id="1.20.5.620">
    <property type="entry name" value="F1F0 ATP synthase subunit B, membrane domain"/>
    <property type="match status" value="1"/>
</dbReference>
<dbReference type="InterPro" id="IPR019933">
    <property type="entry name" value="DivIVA_domain"/>
</dbReference>
<dbReference type="InterPro" id="IPR007793">
    <property type="entry name" value="DivIVA_fam"/>
</dbReference>
<dbReference type="NCBIfam" id="TIGR03544">
    <property type="entry name" value="DivI1A_domain"/>
    <property type="match status" value="1"/>
</dbReference>
<dbReference type="PANTHER" id="PTHR35794">
    <property type="entry name" value="CELL DIVISION PROTEIN DIVIVA"/>
    <property type="match status" value="1"/>
</dbReference>
<dbReference type="PANTHER" id="PTHR35794:SF2">
    <property type="entry name" value="CELL DIVISION PROTEIN DIVIVA"/>
    <property type="match status" value="1"/>
</dbReference>
<dbReference type="Pfam" id="PF05103">
    <property type="entry name" value="DivIVA"/>
    <property type="match status" value="1"/>
</dbReference>
<dbReference type="SUPFAM" id="SSF58113">
    <property type="entry name" value="Apolipoprotein A-I"/>
    <property type="match status" value="1"/>
</dbReference>
<comment type="function">
    <text evidence="4 5">Important for maintaining cell shape and cell wall integrity by localizing peptidoglycan synthesis to the cell poles. Protects PbpB (PBP3, FtsI) from oxidative stress-induced cleavage.</text>
</comment>
<comment type="subunit">
    <text evidence="1 5 7">Forms homooligomers (By similarity). Interacts with PbpB and CwsA.</text>
</comment>
<comment type="subcellular location">
    <subcellularLocation>
        <location evidence="4">Cytoplasm</location>
    </subcellularLocation>
    <text>Localizes to the cell poles.</text>
</comment>
<comment type="induction">
    <text evidence="6">Positively regulated by the stringent response.</text>
</comment>
<comment type="PTM">
    <text evidence="1">Phosphorylated by PknA.</text>
</comment>
<comment type="disruption phenotype">
    <text evidence="4">Depletion causes a morphological change in which one end of the cell becomes round rather than rod-shaped. This phenotype is caused by the absence or dispersal of peptidoglycan synthesis.</text>
</comment>
<comment type="similarity">
    <text evidence="8">Belongs to the DivIVA family.</text>
</comment>
<organism>
    <name type="scientific">Mycolicibacterium smegmatis (strain ATCC 700084 / mc(2)155)</name>
    <name type="common">Mycobacterium smegmatis</name>
    <dbReference type="NCBI Taxonomy" id="246196"/>
    <lineage>
        <taxon>Bacteria</taxon>
        <taxon>Bacillati</taxon>
        <taxon>Actinomycetota</taxon>
        <taxon>Actinomycetes</taxon>
        <taxon>Mycobacteriales</taxon>
        <taxon>Mycobacteriaceae</taxon>
        <taxon>Mycolicibacterium</taxon>
    </lineage>
</organism>
<keyword id="KW-0131">Cell cycle</keyword>
<keyword id="KW-0132">Cell division</keyword>
<keyword id="KW-0133">Cell shape</keyword>
<keyword id="KW-0175">Coiled coil</keyword>
<keyword id="KW-0963">Cytoplasm</keyword>
<keyword id="KW-0597">Phosphoprotein</keyword>
<keyword id="KW-1185">Reference proteome</keyword>
<keyword id="KW-0346">Stress response</keyword>
<reference key="1">
    <citation type="submission" date="2006-10" db="EMBL/GenBank/DDBJ databases">
        <authorList>
            <person name="Fleischmann R.D."/>
            <person name="Dodson R.J."/>
            <person name="Haft D.H."/>
            <person name="Merkel J.S."/>
            <person name="Nelson W.C."/>
            <person name="Fraser C.M."/>
        </authorList>
    </citation>
    <scope>NUCLEOTIDE SEQUENCE [LARGE SCALE GENOMIC DNA]</scope>
    <source>
        <strain>ATCC 700084 / mc(2)155</strain>
    </source>
</reference>
<reference key="2">
    <citation type="journal article" date="2007" name="Genome Biol.">
        <title>Interrupted coding sequences in Mycobacterium smegmatis: authentic mutations or sequencing errors?</title>
        <authorList>
            <person name="Deshayes C."/>
            <person name="Perrodou E."/>
            <person name="Gallien S."/>
            <person name="Euphrasie D."/>
            <person name="Schaeffer C."/>
            <person name="Van-Dorsselaer A."/>
            <person name="Poch O."/>
            <person name="Lecompte O."/>
            <person name="Reyrat J.-M."/>
        </authorList>
    </citation>
    <scope>NUCLEOTIDE SEQUENCE [LARGE SCALE GENOMIC DNA]</scope>
    <source>
        <strain>ATCC 700084 / mc(2)155</strain>
    </source>
</reference>
<reference key="3">
    <citation type="journal article" date="2009" name="Genome Res.">
        <title>Ortho-proteogenomics: multiple proteomes investigation through orthology and a new MS-based protocol.</title>
        <authorList>
            <person name="Gallien S."/>
            <person name="Perrodou E."/>
            <person name="Carapito C."/>
            <person name="Deshayes C."/>
            <person name="Reyrat J.-M."/>
            <person name="Van Dorsselaer A."/>
            <person name="Poch O."/>
            <person name="Schaeffer C."/>
            <person name="Lecompte O."/>
        </authorList>
    </citation>
    <scope>NUCLEOTIDE SEQUENCE [LARGE SCALE GENOMIC DNA]</scope>
    <source>
        <strain>ATCC 700084 / mc(2)155</strain>
    </source>
</reference>
<reference key="4">
    <citation type="journal article" date="2008" name="Microbiology">
        <title>Wag31, a homologue of the cell division protein DivIVA, regulates growth, morphology and polar cell wall synthesis in mycobacteria.</title>
        <authorList>
            <person name="Kang C.M."/>
            <person name="Nyayapathy S."/>
            <person name="Lee J.Y."/>
            <person name="Suh J.W."/>
            <person name="Husson R.N."/>
        </authorList>
    </citation>
    <scope>FUNCTION</scope>
    <scope>SUBCELLULAR LOCATION</scope>
    <scope>DISRUPTION PHENOTYPE</scope>
</reference>
<reference key="5">
    <citation type="journal article" date="2009" name="Mol. Microbiol.">
        <title>Novel role of Wag31 in protection of mycobacteria under oxidative stress.</title>
        <authorList>
            <person name="Mukherjee P."/>
            <person name="Sureka K."/>
            <person name="Datta P."/>
            <person name="Hossain T."/>
            <person name="Barik S."/>
            <person name="Das K.P."/>
            <person name="Kundu M."/>
            <person name="Basu J."/>
        </authorList>
    </citation>
    <scope>FUNCTION</scope>
    <scope>INTERACTION WITH PBPB</scope>
    <source>
        <strain>ATCC 700084 / mc(2)155</strain>
    </source>
</reference>
<reference key="6">
    <citation type="journal article" date="2011" name="FEMS Microbiol. Lett.">
        <title>The wag31 gene of Mycobacterium tuberculosis is positively regulated by the stringent response.</title>
        <authorList>
            <person name="Dahl J.L."/>
            <person name="Lau Bonilla D."/>
        </authorList>
    </citation>
    <scope>INDUCTION</scope>
    <source>
        <strain>ATCC 700084 / mc(2)155</strain>
    </source>
</reference>
<reference key="7">
    <citation type="journal article" date="2012" name="J. Bacteriol.">
        <title>Mycobacterium tuberculosis CwsA interacts with CrgA and Wag31, and the CrgA-CwsA complex is involved in peptidoglycan synthesis and cell shape determination.</title>
        <authorList>
            <person name="Plocinski P."/>
            <person name="Arora N."/>
            <person name="Sarva K."/>
            <person name="Blaszczyk E."/>
            <person name="Qin H."/>
            <person name="Das N."/>
            <person name="Plocinska R."/>
            <person name="Ziolkiewicz M."/>
            <person name="Dziadek J."/>
            <person name="Kiran M."/>
            <person name="Gorla P."/>
            <person name="Cross T.A."/>
            <person name="Madiraju M."/>
            <person name="Rajagopalan M."/>
        </authorList>
    </citation>
    <scope>INTERACTION WITH CWSA</scope>
    <source>
        <strain>ATCC 700084 / mc(2)155</strain>
    </source>
</reference>
<evidence type="ECO:0000250" key="1"/>
<evidence type="ECO:0000255" key="2"/>
<evidence type="ECO:0000256" key="3">
    <source>
        <dbReference type="SAM" id="MobiDB-lite"/>
    </source>
</evidence>
<evidence type="ECO:0000269" key="4">
    <source>
    </source>
</evidence>
<evidence type="ECO:0000269" key="5">
    <source>
    </source>
</evidence>
<evidence type="ECO:0000269" key="6">
    <source>
    </source>
</evidence>
<evidence type="ECO:0000269" key="7">
    <source>
    </source>
</evidence>
<evidence type="ECO:0000305" key="8"/>
<sequence length="272" mass="29544">MPLTPADVHNVAFSKPPIGKRGYNEDEVDAFLDLVENELTRLIEENADLRQRVAELDQELAAARSGAGASSQATSSIPLYEPEPEPAPAPPQPVYEAPAQPAAPQSEDTAVRAARVLSLAQDTADRLTSTAKAEADKLLSDARAQAEAMVSDARQTAETTVSEARQRADAMLADAQTRSEAQLRQAQEKADALQADAERKHSEIMGTINQQRTVLEGRLEQLRTFEREYRTRLKTYLESQLEELGQRGSAAPVDSSANSDASGFGQFNRGNN</sequence>
<name>WAG31_MYCS2</name>
<accession>A0R006</accession>
<gene>
    <name type="primary">wag31</name>
    <name type="synonym">ag84</name>
    <name type="ordered locus">MSMEG_4217</name>
    <name type="ordered locus">MSMEI_4119</name>
</gene>